<dbReference type="EMBL" id="L27082">
    <property type="protein sequence ID" value="AAA98269.1"/>
    <property type="status" value="ALT_INIT"/>
    <property type="molecule type" value="Genomic_DNA"/>
</dbReference>
<dbReference type="RefSeq" id="WP_001159868.1">
    <property type="nucleotide sequence ID" value="NZ_WWEV01000072.1"/>
</dbReference>
<dbReference type="RefSeq" id="YP_003108267.1">
    <property type="nucleotide sequence ID" value="NC_013122.1"/>
</dbReference>
<dbReference type="SMR" id="Q52043"/>
<dbReference type="GO" id="GO:0008657">
    <property type="term" value="F:DNA topoisomerase type II (double strand cut, ATP-hydrolyzing) inhibitor activity"/>
    <property type="evidence" value="ECO:0007669"/>
    <property type="project" value="InterPro"/>
</dbReference>
<dbReference type="GO" id="GO:0006276">
    <property type="term" value="P:plasmid maintenance"/>
    <property type="evidence" value="ECO:0007669"/>
    <property type="project" value="InterPro"/>
</dbReference>
<dbReference type="Gene3D" id="2.30.30.110">
    <property type="match status" value="1"/>
</dbReference>
<dbReference type="InterPro" id="IPR002712">
    <property type="entry name" value="CcdB"/>
</dbReference>
<dbReference type="InterPro" id="IPR011067">
    <property type="entry name" value="Plasmid_toxin/cell-grow_inhib"/>
</dbReference>
<dbReference type="NCBIfam" id="NF010262">
    <property type="entry name" value="PRK13708.1"/>
    <property type="match status" value="1"/>
</dbReference>
<dbReference type="Pfam" id="PF01845">
    <property type="entry name" value="CcdB"/>
    <property type="match status" value="1"/>
</dbReference>
<dbReference type="SUPFAM" id="SSF50118">
    <property type="entry name" value="Cell growth inhibitor/plasmid maintenance toxic component"/>
    <property type="match status" value="1"/>
</dbReference>
<geneLocation type="plasmid">
    <name>pKIL19</name>
</geneLocation>
<proteinExistence type="inferred from homology"/>
<keyword id="KW-0614">Plasmid</keyword>
<keyword id="KW-0678">Repressor</keyword>
<keyword id="KW-1277">Toxin-antitoxin system</keyword>
<keyword id="KW-0804">Transcription</keyword>
<keyword id="KW-0805">Transcription regulation</keyword>
<reference key="1">
    <citation type="journal article" date="1994" name="Gene">
        <title>Positive-selection vectors using the F plasmid ccdB killer gene.</title>
        <authorList>
            <person name="Bernard P."/>
            <person name="Gabant P."/>
            <person name="Bahassi E.M."/>
            <person name="Couturier M."/>
        </authorList>
    </citation>
    <scope>NUCLEOTIDE SEQUENCE [GENOMIC DNA]</scope>
</reference>
<evidence type="ECO:0000250" key="1"/>
<evidence type="ECO:0000305" key="2"/>
<gene>
    <name type="primary">ccdB</name>
    <name type="synonym">letB</name>
</gene>
<organism>
    <name type="scientific">Escherichia coli</name>
    <dbReference type="NCBI Taxonomy" id="562"/>
    <lineage>
        <taxon>Bacteria</taxon>
        <taxon>Pseudomonadati</taxon>
        <taxon>Pseudomonadota</taxon>
        <taxon>Gammaproteobacteria</taxon>
        <taxon>Enterobacterales</taxon>
        <taxon>Enterobacteriaceae</taxon>
        <taxon>Escherichia</taxon>
    </lineage>
</organism>
<sequence length="101" mass="11707">MQFKVYTYKRESRYRLFVDVQSDIIDTPGRRMVIPLASARLLSDKVSRELYPVVHIGDESWRMMTTDMASVPVSVIGEEVADLSHRENDIKNAINLMFWGI</sequence>
<feature type="chain" id="PRO_0000068390" description="Toxin CcdB">
    <location>
        <begin position="1"/>
        <end position="101"/>
    </location>
</feature>
<accession>Q52043</accession>
<protein>
    <recommendedName>
        <fullName>Toxin CcdB</fullName>
    </recommendedName>
    <alternativeName>
        <fullName>Cytotoxic protein CcdB</fullName>
    </alternativeName>
    <alternativeName>
        <fullName>Protein LetD</fullName>
    </alternativeName>
</protein>
<name>CCDB4_ECOLX</name>
<comment type="function">
    <text evidence="1">Toxic component of a type II toxin-antitoxin (TA) system, functioning in plasmid maintainence. Responsible for the post-segregational killing (PSK) of plasmid-free cells, also referred to as a plasmid addiction system. Half-life of over 2 hours. Interferes with the activity of DNA gyrase, inducing it to form a covalent GyrA-DNA complex that cannot be resolved, thus promoting breakage of plasmid and chromosomal DNA. Toxicity is inhibited by labile antitoxin CcdA, which blocks the activity of CcdB; CcdA also removes bound CcdB protein from the CcdB-GyrA complex by forming a CcdA-CcdB complex, a process termed rejuvenation. Functions as a transcriptional corepressor for the ccdAB operon, repression also requires CcdA (By similarity).</text>
</comment>
<comment type="subunit">
    <text evidence="1">Homodimer. Forms a complex with GyrA, probably a tetramer GyrA(2)CcdB(2), in which GyrA is inactive. Forms a complex with toxin CcdB; the CcdA-CcdB(2) trimer is sufficient for rejuvenation, whereas maximal operon repression occurs with CcdA(2)CcdB(2) (By similarity).</text>
</comment>
<comment type="similarity">
    <text evidence="2">Belongs to the CcdB toxin family.</text>
</comment>
<comment type="sequence caution" evidence="2">
    <conflict type="erroneous initiation">
        <sequence resource="EMBL-CDS" id="AAA98269"/>
    </conflict>
    <text>Extended N-terminus.</text>
</comment>